<reference key="1">
    <citation type="journal article" date="2004" name="Nature">
        <title>Genome evolution in yeasts.</title>
        <authorList>
            <person name="Dujon B."/>
            <person name="Sherman D."/>
            <person name="Fischer G."/>
            <person name="Durrens P."/>
            <person name="Casaregola S."/>
            <person name="Lafontaine I."/>
            <person name="de Montigny J."/>
            <person name="Marck C."/>
            <person name="Neuveglise C."/>
            <person name="Talla E."/>
            <person name="Goffard N."/>
            <person name="Frangeul L."/>
            <person name="Aigle M."/>
            <person name="Anthouard V."/>
            <person name="Babour A."/>
            <person name="Barbe V."/>
            <person name="Barnay S."/>
            <person name="Blanchin S."/>
            <person name="Beckerich J.-M."/>
            <person name="Beyne E."/>
            <person name="Bleykasten C."/>
            <person name="Boisrame A."/>
            <person name="Boyer J."/>
            <person name="Cattolico L."/>
            <person name="Confanioleri F."/>
            <person name="de Daruvar A."/>
            <person name="Despons L."/>
            <person name="Fabre E."/>
            <person name="Fairhead C."/>
            <person name="Ferry-Dumazet H."/>
            <person name="Groppi A."/>
            <person name="Hantraye F."/>
            <person name="Hennequin C."/>
            <person name="Jauniaux N."/>
            <person name="Joyet P."/>
            <person name="Kachouri R."/>
            <person name="Kerrest A."/>
            <person name="Koszul R."/>
            <person name="Lemaire M."/>
            <person name="Lesur I."/>
            <person name="Ma L."/>
            <person name="Muller H."/>
            <person name="Nicaud J.-M."/>
            <person name="Nikolski M."/>
            <person name="Oztas S."/>
            <person name="Ozier-Kalogeropoulos O."/>
            <person name="Pellenz S."/>
            <person name="Potier S."/>
            <person name="Richard G.-F."/>
            <person name="Straub M.-L."/>
            <person name="Suleau A."/>
            <person name="Swennen D."/>
            <person name="Tekaia F."/>
            <person name="Wesolowski-Louvel M."/>
            <person name="Westhof E."/>
            <person name="Wirth B."/>
            <person name="Zeniou-Meyer M."/>
            <person name="Zivanovic Y."/>
            <person name="Bolotin-Fukuhara M."/>
            <person name="Thierry A."/>
            <person name="Bouchier C."/>
            <person name="Caudron B."/>
            <person name="Scarpelli C."/>
            <person name="Gaillardin C."/>
            <person name="Weissenbach J."/>
            <person name="Wincker P."/>
            <person name="Souciet J.-L."/>
        </authorList>
    </citation>
    <scope>NUCLEOTIDE SEQUENCE [LARGE SCALE GENOMIC DNA]</scope>
    <source>
        <strain>ATCC 8585 / CBS 2359 / DSM 70799 / NBRC 1267 / NRRL Y-1140 / WM37</strain>
    </source>
</reference>
<organism>
    <name type="scientific">Kluyveromyces lactis (strain ATCC 8585 / CBS 2359 / DSM 70799 / NBRC 1267 / NRRL Y-1140 / WM37)</name>
    <name type="common">Yeast</name>
    <name type="synonym">Candida sphaerica</name>
    <dbReference type="NCBI Taxonomy" id="284590"/>
    <lineage>
        <taxon>Eukaryota</taxon>
        <taxon>Fungi</taxon>
        <taxon>Dikarya</taxon>
        <taxon>Ascomycota</taxon>
        <taxon>Saccharomycotina</taxon>
        <taxon>Saccharomycetes</taxon>
        <taxon>Saccharomycetales</taxon>
        <taxon>Saccharomycetaceae</taxon>
        <taxon>Kluyveromyces</taxon>
    </lineage>
</organism>
<keyword id="KW-0131">Cell cycle</keyword>
<keyword id="KW-0132">Cell division</keyword>
<keyword id="KW-0963">Cytoplasm</keyword>
<keyword id="KW-0206">Cytoskeleton</keyword>
<keyword id="KW-0493">Microtubule</keyword>
<keyword id="KW-0498">Mitosis</keyword>
<keyword id="KW-0539">Nucleus</keyword>
<keyword id="KW-1185">Reference proteome</keyword>
<proteinExistence type="inferred from homology"/>
<comment type="function">
    <text evidence="1">Microtubule binding protein that promotes the stabilization of dynamic microtubules. Required for mitotic spindle formation (By similarity).</text>
</comment>
<comment type="subunit">
    <text evidence="1">Interacts with microtubules.</text>
</comment>
<comment type="subcellular location">
    <subcellularLocation>
        <location evidence="1">Cytoplasm</location>
        <location evidence="1">Cytoskeleton</location>
    </subcellularLocation>
    <subcellularLocation>
        <location evidence="1">Nucleus</location>
    </subcellularLocation>
    <subcellularLocation>
        <location evidence="1">Cytoplasm</location>
        <location evidence="1">Cytoskeleton</location>
        <location evidence="1">Spindle</location>
    </subcellularLocation>
</comment>
<comment type="similarity">
    <text evidence="3">Belongs to the CLASP family.</text>
</comment>
<dbReference type="EMBL" id="CR382122">
    <property type="protein sequence ID" value="CAH02472.1"/>
    <property type="molecule type" value="Genomic_DNA"/>
</dbReference>
<dbReference type="RefSeq" id="XP_452079.1">
    <property type="nucleotide sequence ID" value="XM_452079.1"/>
</dbReference>
<dbReference type="SMR" id="Q6CVG0"/>
<dbReference type="FunCoup" id="Q6CVG0">
    <property type="interactions" value="180"/>
</dbReference>
<dbReference type="STRING" id="284590.Q6CVG0"/>
<dbReference type="PaxDb" id="284590-Q6CVG0"/>
<dbReference type="KEGG" id="kla:KLLA0_B12331g"/>
<dbReference type="eggNOG" id="ENOG502QT5T">
    <property type="taxonomic scope" value="Eukaryota"/>
</dbReference>
<dbReference type="HOGENOM" id="CLU_256206_0_0_1"/>
<dbReference type="InParanoid" id="Q6CVG0"/>
<dbReference type="OMA" id="TFWYYYK"/>
<dbReference type="Proteomes" id="UP000000598">
    <property type="component" value="Chromosome B"/>
</dbReference>
<dbReference type="GO" id="GO:0005881">
    <property type="term" value="C:cytoplasmic microtubule"/>
    <property type="evidence" value="ECO:0007669"/>
    <property type="project" value="TreeGrafter"/>
</dbReference>
<dbReference type="GO" id="GO:0005815">
    <property type="term" value="C:microtubule organizing center"/>
    <property type="evidence" value="ECO:0007669"/>
    <property type="project" value="TreeGrafter"/>
</dbReference>
<dbReference type="GO" id="GO:1990023">
    <property type="term" value="C:mitotic spindle midzone"/>
    <property type="evidence" value="ECO:0007669"/>
    <property type="project" value="TreeGrafter"/>
</dbReference>
<dbReference type="GO" id="GO:0005634">
    <property type="term" value="C:nucleus"/>
    <property type="evidence" value="ECO:0007669"/>
    <property type="project" value="UniProtKB-SubCell"/>
</dbReference>
<dbReference type="GO" id="GO:0005876">
    <property type="term" value="C:spindle microtubule"/>
    <property type="evidence" value="ECO:0007669"/>
    <property type="project" value="TreeGrafter"/>
</dbReference>
<dbReference type="GO" id="GO:0008017">
    <property type="term" value="F:microtubule binding"/>
    <property type="evidence" value="ECO:0007669"/>
    <property type="project" value="TreeGrafter"/>
</dbReference>
<dbReference type="GO" id="GO:0060172">
    <property type="term" value="P:astral microtubule depolymerization"/>
    <property type="evidence" value="ECO:0007669"/>
    <property type="project" value="TreeGrafter"/>
</dbReference>
<dbReference type="GO" id="GO:0051301">
    <property type="term" value="P:cell division"/>
    <property type="evidence" value="ECO:0007669"/>
    <property type="project" value="UniProtKB-KW"/>
</dbReference>
<dbReference type="GO" id="GO:0090307">
    <property type="term" value="P:mitotic spindle assembly"/>
    <property type="evidence" value="ECO:0007669"/>
    <property type="project" value="TreeGrafter"/>
</dbReference>
<dbReference type="Gene3D" id="1.25.10.10">
    <property type="entry name" value="Leucine-rich Repeat Variant"/>
    <property type="match status" value="1"/>
</dbReference>
<dbReference type="InterPro" id="IPR011989">
    <property type="entry name" value="ARM-like"/>
</dbReference>
<dbReference type="InterPro" id="IPR016024">
    <property type="entry name" value="ARM-type_fold"/>
</dbReference>
<dbReference type="InterPro" id="IPR024395">
    <property type="entry name" value="CLASP_N_dom"/>
</dbReference>
<dbReference type="PANTHER" id="PTHR21567">
    <property type="entry name" value="CLASP"/>
    <property type="match status" value="1"/>
</dbReference>
<dbReference type="PANTHER" id="PTHR21567:SF9">
    <property type="entry name" value="CLIP-ASSOCIATING PROTEIN"/>
    <property type="match status" value="1"/>
</dbReference>
<dbReference type="Pfam" id="PF12348">
    <property type="entry name" value="CLASP_N"/>
    <property type="match status" value="1"/>
</dbReference>
<dbReference type="SUPFAM" id="SSF48371">
    <property type="entry name" value="ARM repeat"/>
    <property type="match status" value="1"/>
</dbReference>
<name>STU1_KLULA</name>
<feature type="chain" id="PRO_0000272291" description="Protein STU1">
    <location>
        <begin position="1"/>
        <end position="1358"/>
    </location>
</feature>
<feature type="region of interest" description="Disordered" evidence="2">
    <location>
        <begin position="915"/>
        <end position="950"/>
    </location>
</feature>
<feature type="region of interest" description="Disordered" evidence="2">
    <location>
        <begin position="970"/>
        <end position="990"/>
    </location>
</feature>
<feature type="compositionally biased region" description="Basic and acidic residues" evidence="2">
    <location>
        <begin position="926"/>
        <end position="949"/>
    </location>
</feature>
<feature type="compositionally biased region" description="Acidic residues" evidence="2">
    <location>
        <begin position="973"/>
        <end position="990"/>
    </location>
</feature>
<accession>Q6CVG0</accession>
<protein>
    <recommendedName>
        <fullName>Protein STU1</fullName>
    </recommendedName>
</protein>
<evidence type="ECO:0000250" key="1"/>
<evidence type="ECO:0000256" key="2">
    <source>
        <dbReference type="SAM" id="MobiDB-lite"/>
    </source>
</evidence>
<evidence type="ECO:0000305" key="3"/>
<gene>
    <name type="primary">STU1</name>
    <name type="ordered locus">KLLA0B12331g</name>
</gene>
<sequence>MSDEFNGLDGLSDELLSAERKLDILTQFKAHVKKTLVNEQVCVKYFENLSRLLVERGSNRRRGNDGDDVVFALAHSALCYLIKRVAMQAQHKFQHDLIELIVSTLFSIPFADKKVWQSSVKALEAIYLAKPNEFCQVLNESIAYNGSIRTNVLLLIDELARMESSNGRNGSMFLQKFIPFWVQEMNTNDSISNTDIELIYDIVANRCPEPMVRSMVDSVIRESAAKVFKSRLVGKLNNHGSESDMKDDFDRSITHTNSINSQVFNLQNELQSIMHQAPQFPTVPAPEPISYSNLSYLIKDLESMLPAFEGSRETEQNWKIRQTNVTKLRSIVLGNVSIEFPDKFLELWKDLNLQYCVTKSALSLRTSLCTHGCSLVKDLCCVFNSMLDISIIENLWSCLAKLMSNTKKIANQNAFICLITLLSTVPFHSRLFNHCFALIRDKNNVSRLYSSTFLRILIVRFHKRLISQHHVYVEEWLQKGLTDAQTTIRESMRITFWYWFKVSPMSGKKMLNLFQPQIKRALENSIPTHLDINYEAAIPPQSKESSRRSSLLPKRFPSYAAPTQSSHLPRSSIKRSLTDLAQGTQSFSKRSLRTPPDHDMNIDLTSELTNSQTNPLLNRYMKREEVEPEPLHVILSKDPKLGLDLLQKYLLSDTKIGDEEKVQSAIVSLIRTNPKAFKPLLHLPKFYQLIPLNFSMVLLPLNDLDISMIETQFKTYDIINNVISILQSLEDKNSEWSIFYVRFKYQIYNFCFNTIAKMLNTVTLSDQLINELINACGKDMDAEKYYKLILNIYLADKTKFVRLLKSTSTASTKLKIANVIQKKDSEFKIKSILNYPSVPEPIVSPEEHHLLEMTMVNPLGKRTVSSNTVIHNSLEGLDESESNPNIIADEDNHSEKEDLVTVPPVAKNSVNTVSFVADSPSDSDNDDTKKNGSDVVDHEEIRDHEESHGFTKFGGFSKLTEMTKVHSVFQPETVDENVDPMEVDSPDESNLDQKSLLTDIFLKNQHQEGSVSPIFKPQELNNDPRHDYDSDMLSDAINGIEIKTNDGSVANRSEDDIKTLGTNMGSVSDPKTFKPINLAHFANDSLFSFELKFIDASIGIVNLTQLKLIVQSIINNGTFKMNELQYILKCFLCYDQEVLEWIHDQHELKDVWAITELLLSSSSSESQIPTNIAYKSIILTACLLTIDDELEHTVLKDSSISQLFEHIISLVAKLDTFENEIYFACTELRTLLLSQDNNKHLPSFLEKCLKALCDTKEQYIVKISFLLETINGIISSMGNLLSVDVLRDLAKTISRYTPSDVAEWRFASCTALATIYSQLISRSTPVGYIRSLMPLLDPSDFEVVRSLSTTKDATRRLG</sequence>